<feature type="chain" id="PRO_0000374266" description="tRNA-2-methylthio-N(6)-dimethylallyladenosine synthase">
    <location>
        <begin position="1"/>
        <end position="464"/>
    </location>
</feature>
<feature type="domain" description="MTTase N-terminal" evidence="1">
    <location>
        <begin position="4"/>
        <end position="119"/>
    </location>
</feature>
<feature type="domain" description="Radical SAM core" evidence="2">
    <location>
        <begin position="144"/>
        <end position="375"/>
    </location>
</feature>
<feature type="domain" description="TRAM" evidence="1">
    <location>
        <begin position="378"/>
        <end position="461"/>
    </location>
</feature>
<feature type="region of interest" description="Disordered" evidence="3">
    <location>
        <begin position="393"/>
        <end position="420"/>
    </location>
</feature>
<feature type="binding site" evidence="1">
    <location>
        <position position="13"/>
    </location>
    <ligand>
        <name>[4Fe-4S] cluster</name>
        <dbReference type="ChEBI" id="CHEBI:49883"/>
        <label>1</label>
    </ligand>
</feature>
<feature type="binding site" evidence="1">
    <location>
        <position position="48"/>
    </location>
    <ligand>
        <name>[4Fe-4S] cluster</name>
        <dbReference type="ChEBI" id="CHEBI:49883"/>
        <label>1</label>
    </ligand>
</feature>
<feature type="binding site" evidence="1">
    <location>
        <position position="82"/>
    </location>
    <ligand>
        <name>[4Fe-4S] cluster</name>
        <dbReference type="ChEBI" id="CHEBI:49883"/>
        <label>1</label>
    </ligand>
</feature>
<feature type="binding site" evidence="1">
    <location>
        <position position="158"/>
    </location>
    <ligand>
        <name>[4Fe-4S] cluster</name>
        <dbReference type="ChEBI" id="CHEBI:49883"/>
        <label>2</label>
        <note>4Fe-4S-S-AdoMet</note>
    </ligand>
</feature>
<feature type="binding site" evidence="1">
    <location>
        <position position="162"/>
    </location>
    <ligand>
        <name>[4Fe-4S] cluster</name>
        <dbReference type="ChEBI" id="CHEBI:49883"/>
        <label>2</label>
        <note>4Fe-4S-S-AdoMet</note>
    </ligand>
</feature>
<feature type="binding site" evidence="1">
    <location>
        <position position="165"/>
    </location>
    <ligand>
        <name>[4Fe-4S] cluster</name>
        <dbReference type="ChEBI" id="CHEBI:49883"/>
        <label>2</label>
        <note>4Fe-4S-S-AdoMet</note>
    </ligand>
</feature>
<evidence type="ECO:0000255" key="1">
    <source>
        <dbReference type="HAMAP-Rule" id="MF_01864"/>
    </source>
</evidence>
<evidence type="ECO:0000255" key="2">
    <source>
        <dbReference type="PROSITE-ProRule" id="PRU01266"/>
    </source>
</evidence>
<evidence type="ECO:0000256" key="3">
    <source>
        <dbReference type="SAM" id="MobiDB-lite"/>
    </source>
</evidence>
<keyword id="KW-0004">4Fe-4S</keyword>
<keyword id="KW-0963">Cytoplasm</keyword>
<keyword id="KW-0408">Iron</keyword>
<keyword id="KW-0411">Iron-sulfur</keyword>
<keyword id="KW-0479">Metal-binding</keyword>
<keyword id="KW-1185">Reference proteome</keyword>
<keyword id="KW-0949">S-adenosyl-L-methionine</keyword>
<keyword id="KW-0808">Transferase</keyword>
<keyword id="KW-0819">tRNA processing</keyword>
<organism>
    <name type="scientific">Oleidesulfovibrio alaskensis (strain ATCC BAA-1058 / DSM 17464 / G20)</name>
    <name type="common">Desulfovibrio alaskensis</name>
    <dbReference type="NCBI Taxonomy" id="207559"/>
    <lineage>
        <taxon>Bacteria</taxon>
        <taxon>Pseudomonadati</taxon>
        <taxon>Thermodesulfobacteriota</taxon>
        <taxon>Desulfovibrionia</taxon>
        <taxon>Desulfovibrionales</taxon>
        <taxon>Desulfovibrionaceae</taxon>
        <taxon>Oleidesulfovibrio</taxon>
    </lineage>
</organism>
<dbReference type="EC" id="2.8.4.3" evidence="1"/>
<dbReference type="EMBL" id="CP000112">
    <property type="protein sequence ID" value="ABB39175.1"/>
    <property type="molecule type" value="Genomic_DNA"/>
</dbReference>
<dbReference type="RefSeq" id="WP_011368250.1">
    <property type="nucleotide sequence ID" value="NC_007519.1"/>
</dbReference>
<dbReference type="SMR" id="Q30YS1"/>
<dbReference type="STRING" id="207559.Dde_2378"/>
<dbReference type="KEGG" id="dde:Dde_2378"/>
<dbReference type="eggNOG" id="COG0621">
    <property type="taxonomic scope" value="Bacteria"/>
</dbReference>
<dbReference type="HOGENOM" id="CLU_018697_2_0_7"/>
<dbReference type="Proteomes" id="UP000002710">
    <property type="component" value="Chromosome"/>
</dbReference>
<dbReference type="GO" id="GO:0005829">
    <property type="term" value="C:cytosol"/>
    <property type="evidence" value="ECO:0007669"/>
    <property type="project" value="TreeGrafter"/>
</dbReference>
<dbReference type="GO" id="GO:0051539">
    <property type="term" value="F:4 iron, 4 sulfur cluster binding"/>
    <property type="evidence" value="ECO:0007669"/>
    <property type="project" value="UniProtKB-UniRule"/>
</dbReference>
<dbReference type="GO" id="GO:0046872">
    <property type="term" value="F:metal ion binding"/>
    <property type="evidence" value="ECO:0007669"/>
    <property type="project" value="UniProtKB-KW"/>
</dbReference>
<dbReference type="GO" id="GO:0035597">
    <property type="term" value="F:N6-isopentenyladenosine methylthiotransferase activity"/>
    <property type="evidence" value="ECO:0007669"/>
    <property type="project" value="TreeGrafter"/>
</dbReference>
<dbReference type="CDD" id="cd01335">
    <property type="entry name" value="Radical_SAM"/>
    <property type="match status" value="1"/>
</dbReference>
<dbReference type="FunFam" id="3.40.50.12160:FF:000003">
    <property type="entry name" value="CDK5 regulatory subunit-associated protein 1"/>
    <property type="match status" value="1"/>
</dbReference>
<dbReference type="FunFam" id="3.80.30.20:FF:000001">
    <property type="entry name" value="tRNA-2-methylthio-N(6)-dimethylallyladenosine synthase 2"/>
    <property type="match status" value="1"/>
</dbReference>
<dbReference type="Gene3D" id="3.40.50.12160">
    <property type="entry name" value="Methylthiotransferase, N-terminal domain"/>
    <property type="match status" value="1"/>
</dbReference>
<dbReference type="Gene3D" id="3.80.30.20">
    <property type="entry name" value="tm_1862 like domain"/>
    <property type="match status" value="1"/>
</dbReference>
<dbReference type="HAMAP" id="MF_01864">
    <property type="entry name" value="tRNA_metthiotr_MiaB"/>
    <property type="match status" value="1"/>
</dbReference>
<dbReference type="InterPro" id="IPR006638">
    <property type="entry name" value="Elp3/MiaA/NifB-like_rSAM"/>
</dbReference>
<dbReference type="InterPro" id="IPR005839">
    <property type="entry name" value="Methylthiotransferase"/>
</dbReference>
<dbReference type="InterPro" id="IPR020612">
    <property type="entry name" value="Methylthiotransferase_CS"/>
</dbReference>
<dbReference type="InterPro" id="IPR013848">
    <property type="entry name" value="Methylthiotransferase_N"/>
</dbReference>
<dbReference type="InterPro" id="IPR038135">
    <property type="entry name" value="Methylthiotransferase_N_sf"/>
</dbReference>
<dbReference type="InterPro" id="IPR006463">
    <property type="entry name" value="MiaB_methiolase"/>
</dbReference>
<dbReference type="InterPro" id="IPR007197">
    <property type="entry name" value="rSAM"/>
</dbReference>
<dbReference type="InterPro" id="IPR023404">
    <property type="entry name" value="rSAM_horseshoe"/>
</dbReference>
<dbReference type="NCBIfam" id="TIGR01574">
    <property type="entry name" value="miaB-methiolase"/>
    <property type="match status" value="1"/>
</dbReference>
<dbReference type="NCBIfam" id="TIGR00089">
    <property type="entry name" value="MiaB/RimO family radical SAM methylthiotransferase"/>
    <property type="match status" value="1"/>
</dbReference>
<dbReference type="PANTHER" id="PTHR43020">
    <property type="entry name" value="CDK5 REGULATORY SUBUNIT-ASSOCIATED PROTEIN 1"/>
    <property type="match status" value="1"/>
</dbReference>
<dbReference type="PANTHER" id="PTHR43020:SF2">
    <property type="entry name" value="MITOCHONDRIAL TRNA METHYLTHIOTRANSFERASE CDK5RAP1"/>
    <property type="match status" value="1"/>
</dbReference>
<dbReference type="Pfam" id="PF04055">
    <property type="entry name" value="Radical_SAM"/>
    <property type="match status" value="1"/>
</dbReference>
<dbReference type="Pfam" id="PF00919">
    <property type="entry name" value="UPF0004"/>
    <property type="match status" value="1"/>
</dbReference>
<dbReference type="SFLD" id="SFLDF00273">
    <property type="entry name" value="(dimethylallyl)adenosine_tRNA"/>
    <property type="match status" value="1"/>
</dbReference>
<dbReference type="SFLD" id="SFLDG01082">
    <property type="entry name" value="B12-binding_domain_containing"/>
    <property type="match status" value="1"/>
</dbReference>
<dbReference type="SFLD" id="SFLDG01061">
    <property type="entry name" value="methylthiotransferase"/>
    <property type="match status" value="1"/>
</dbReference>
<dbReference type="SMART" id="SM00729">
    <property type="entry name" value="Elp3"/>
    <property type="match status" value="1"/>
</dbReference>
<dbReference type="SUPFAM" id="SSF102114">
    <property type="entry name" value="Radical SAM enzymes"/>
    <property type="match status" value="1"/>
</dbReference>
<dbReference type="PROSITE" id="PS51449">
    <property type="entry name" value="MTTASE_N"/>
    <property type="match status" value="1"/>
</dbReference>
<dbReference type="PROSITE" id="PS01278">
    <property type="entry name" value="MTTASE_RADICAL"/>
    <property type="match status" value="1"/>
</dbReference>
<dbReference type="PROSITE" id="PS51918">
    <property type="entry name" value="RADICAL_SAM"/>
    <property type="match status" value="1"/>
</dbReference>
<protein>
    <recommendedName>
        <fullName evidence="1">tRNA-2-methylthio-N(6)-dimethylallyladenosine synthase</fullName>
        <ecNumber evidence="1">2.8.4.3</ecNumber>
    </recommendedName>
    <alternativeName>
        <fullName evidence="1">(Dimethylallyl)adenosine tRNA methylthiotransferase MiaB</fullName>
    </alternativeName>
    <alternativeName>
        <fullName evidence="1">tRNA-i(6)A37 methylthiotransferase</fullName>
    </alternativeName>
</protein>
<comment type="function">
    <text evidence="1">Catalyzes the methylthiolation of N6-(dimethylallyl)adenosine (i(6)A), leading to the formation of 2-methylthio-N6-(dimethylallyl)adenosine (ms(2)i(6)A) at position 37 in tRNAs that read codons beginning with uridine.</text>
</comment>
<comment type="catalytic activity">
    <reaction evidence="1">
        <text>N(6)-dimethylallyladenosine(37) in tRNA + (sulfur carrier)-SH + AH2 + 2 S-adenosyl-L-methionine = 2-methylsulfanyl-N(6)-dimethylallyladenosine(37) in tRNA + (sulfur carrier)-H + 5'-deoxyadenosine + L-methionine + A + S-adenosyl-L-homocysteine + 2 H(+)</text>
        <dbReference type="Rhea" id="RHEA:37067"/>
        <dbReference type="Rhea" id="RHEA-COMP:10375"/>
        <dbReference type="Rhea" id="RHEA-COMP:10376"/>
        <dbReference type="Rhea" id="RHEA-COMP:14737"/>
        <dbReference type="Rhea" id="RHEA-COMP:14739"/>
        <dbReference type="ChEBI" id="CHEBI:13193"/>
        <dbReference type="ChEBI" id="CHEBI:15378"/>
        <dbReference type="ChEBI" id="CHEBI:17319"/>
        <dbReference type="ChEBI" id="CHEBI:17499"/>
        <dbReference type="ChEBI" id="CHEBI:29917"/>
        <dbReference type="ChEBI" id="CHEBI:57844"/>
        <dbReference type="ChEBI" id="CHEBI:57856"/>
        <dbReference type="ChEBI" id="CHEBI:59789"/>
        <dbReference type="ChEBI" id="CHEBI:64428"/>
        <dbReference type="ChEBI" id="CHEBI:74415"/>
        <dbReference type="ChEBI" id="CHEBI:74417"/>
        <dbReference type="EC" id="2.8.4.3"/>
    </reaction>
</comment>
<comment type="cofactor">
    <cofactor evidence="1">
        <name>[4Fe-4S] cluster</name>
        <dbReference type="ChEBI" id="CHEBI:49883"/>
    </cofactor>
    <text evidence="1">Binds 2 [4Fe-4S] clusters. One cluster is coordinated with 3 cysteines and an exchangeable S-adenosyl-L-methionine.</text>
</comment>
<comment type="subunit">
    <text evidence="1">Monomer.</text>
</comment>
<comment type="subcellular location">
    <subcellularLocation>
        <location evidence="1">Cytoplasm</location>
    </subcellularLocation>
</comment>
<comment type="similarity">
    <text evidence="1">Belongs to the methylthiotransferase family. MiaB subfamily.</text>
</comment>
<accession>Q30YS1</accession>
<proteinExistence type="inferred from homology"/>
<name>MIAB_OLEA2</name>
<gene>
    <name evidence="1" type="primary">miaB</name>
    <name type="ordered locus">Dde_2378</name>
</gene>
<sequence>MHERTFHIMTFGCQMNVNDSDWLARALEARGFTQVPEHEAAIYIINTCSVRDKPEQKVYSLLGRIRRETKNRRNVTVCVGGCVAQQIGKGFFKRFSQVRLVFGTDGAASAPQAIERLVQEPHARISLLDFSEEFPERDAGWENGEVPVSAYVNIMQGCNNFCAYCIVPYTRGRQKSRSSAAVLDECRTLVGNGAREITLLGQNVNSYGLDPHGDGTTFARLLHDVAAIPGLERLRFMTPHPKDIAGEVIEAFGALKNLCPRVHLPLQSGSDRVLKAMGRKYDMARYMDIVTRLKAVRPDIQITSDLIVGFPGETEADFEQTLEAMRTVPFVQSFSFIYSDRPGTRAEMLPGKLSREEKTARLVRLQEVQNEYSEAALQAMVGKTVMVLFESPSPKSAAGSGTDAQNAAEESGRTASSWQGRDEHGFILNVHLPAPADLYGKIMPVTVTAARKHSLTGEPAGESC</sequence>
<reference key="1">
    <citation type="journal article" date="2011" name="J. Bacteriol.">
        <title>Complete genome sequence and updated annotation of Desulfovibrio alaskensis G20.</title>
        <authorList>
            <person name="Hauser L.J."/>
            <person name="Land M.L."/>
            <person name="Brown S.D."/>
            <person name="Larimer F."/>
            <person name="Keller K.L."/>
            <person name="Rapp-Giles B.J."/>
            <person name="Price M.N."/>
            <person name="Lin M."/>
            <person name="Bruce D.C."/>
            <person name="Detter J.C."/>
            <person name="Tapia R."/>
            <person name="Han C.S."/>
            <person name="Goodwin L.A."/>
            <person name="Cheng J.F."/>
            <person name="Pitluck S."/>
            <person name="Copeland A."/>
            <person name="Lucas S."/>
            <person name="Nolan M."/>
            <person name="Lapidus A.L."/>
            <person name="Palumbo A.V."/>
            <person name="Wall J.D."/>
        </authorList>
    </citation>
    <scope>NUCLEOTIDE SEQUENCE [LARGE SCALE GENOMIC DNA]</scope>
    <source>
        <strain>ATCC BAA-1058 / DSM 17464 / G20</strain>
    </source>
</reference>